<gene>
    <name evidence="1" type="primary">spx</name>
    <name type="ordered locus">spyM18_1198</name>
</gene>
<evidence type="ECO:0000255" key="1">
    <source>
        <dbReference type="HAMAP-Rule" id="MF_01132"/>
    </source>
</evidence>
<keyword id="KW-0963">Cytoplasm</keyword>
<keyword id="KW-1015">Disulfide bond</keyword>
<keyword id="KW-0676">Redox-active center</keyword>
<keyword id="KW-0804">Transcription</keyword>
<keyword id="KW-0805">Transcription regulation</keyword>
<dbReference type="EMBL" id="AE009949">
    <property type="protein sequence ID" value="AAL97813.1"/>
    <property type="molecule type" value="Genomic_DNA"/>
</dbReference>
<dbReference type="RefSeq" id="WP_010922362.1">
    <property type="nucleotide sequence ID" value="NC_003485.1"/>
</dbReference>
<dbReference type="SMR" id="P60382"/>
<dbReference type="KEGG" id="spm:spyM18_1198"/>
<dbReference type="HOGENOM" id="CLU_116644_1_1_9"/>
<dbReference type="GO" id="GO:0005737">
    <property type="term" value="C:cytoplasm"/>
    <property type="evidence" value="ECO:0007669"/>
    <property type="project" value="UniProtKB-SubCell"/>
</dbReference>
<dbReference type="GO" id="GO:0045892">
    <property type="term" value="P:negative regulation of DNA-templated transcription"/>
    <property type="evidence" value="ECO:0007669"/>
    <property type="project" value="InterPro"/>
</dbReference>
<dbReference type="CDD" id="cd03032">
    <property type="entry name" value="ArsC_Spx"/>
    <property type="match status" value="1"/>
</dbReference>
<dbReference type="Gene3D" id="3.40.30.10">
    <property type="entry name" value="Glutaredoxin"/>
    <property type="match status" value="1"/>
</dbReference>
<dbReference type="HAMAP" id="MF_01132">
    <property type="entry name" value="Spx"/>
    <property type="match status" value="1"/>
</dbReference>
<dbReference type="InterPro" id="IPR006660">
    <property type="entry name" value="Arsenate_reductase-like"/>
</dbReference>
<dbReference type="InterPro" id="IPR023731">
    <property type="entry name" value="Spx"/>
</dbReference>
<dbReference type="InterPro" id="IPR036249">
    <property type="entry name" value="Thioredoxin-like_sf"/>
</dbReference>
<dbReference type="InterPro" id="IPR006504">
    <property type="entry name" value="Tscrpt_reg_Spx/MgsR"/>
</dbReference>
<dbReference type="NCBIfam" id="TIGR01617">
    <property type="entry name" value="arsC_related"/>
    <property type="match status" value="1"/>
</dbReference>
<dbReference type="NCBIfam" id="NF002459">
    <property type="entry name" value="PRK01655.1"/>
    <property type="match status" value="1"/>
</dbReference>
<dbReference type="PANTHER" id="PTHR30041">
    <property type="entry name" value="ARSENATE REDUCTASE"/>
    <property type="match status" value="1"/>
</dbReference>
<dbReference type="PANTHER" id="PTHR30041:SF7">
    <property type="entry name" value="GLOBAL TRANSCRIPTIONAL REGULATOR SPX"/>
    <property type="match status" value="1"/>
</dbReference>
<dbReference type="Pfam" id="PF03960">
    <property type="entry name" value="ArsC"/>
    <property type="match status" value="1"/>
</dbReference>
<dbReference type="SUPFAM" id="SSF52833">
    <property type="entry name" value="Thioredoxin-like"/>
    <property type="match status" value="1"/>
</dbReference>
<dbReference type="PROSITE" id="PS51353">
    <property type="entry name" value="ARSC"/>
    <property type="match status" value="1"/>
</dbReference>
<comment type="function">
    <text evidence="1">Global transcriptional regulator that plays a key role in stress response and exerts either positive or negative regulation of genes. Acts by interacting with the C-terminal domain of the alpha subunit of the RNA polymerase (RNAP). This interaction can enhance binding of RNAP to the promoter region of target genes and stimulate their transcription, or block interaction of RNAP with activator.</text>
</comment>
<comment type="subunit">
    <text evidence="1">Interacts with the C-terminal domain of the alpha subunit of the RNAP.</text>
</comment>
<comment type="subcellular location">
    <subcellularLocation>
        <location evidence="1">Cytoplasm</location>
    </subcellularLocation>
</comment>
<comment type="similarity">
    <text evidence="1">Belongs to the ArsC family. Spx subfamily.</text>
</comment>
<name>SPX_STRP8</name>
<proteinExistence type="inferred from homology"/>
<accession>P60382</accession>
<accession>Q99ZF7</accession>
<feature type="chain" id="PRO_0000162580" description="Global transcriptional regulator Spx">
    <location>
        <begin position="1"/>
        <end position="134"/>
    </location>
</feature>
<feature type="disulfide bond" description="Redox-active" evidence="1">
    <location>
        <begin position="10"/>
        <end position="13"/>
    </location>
</feature>
<protein>
    <recommendedName>
        <fullName evidence="1">Global transcriptional regulator Spx</fullName>
    </recommendedName>
</protein>
<organism>
    <name type="scientific">Streptococcus pyogenes serotype M18 (strain MGAS8232)</name>
    <dbReference type="NCBI Taxonomy" id="186103"/>
    <lineage>
        <taxon>Bacteria</taxon>
        <taxon>Bacillati</taxon>
        <taxon>Bacillota</taxon>
        <taxon>Bacilli</taxon>
        <taxon>Lactobacillales</taxon>
        <taxon>Streptococcaceae</taxon>
        <taxon>Streptococcus</taxon>
    </lineage>
</organism>
<sequence length="134" mass="15528">MVTLFLSPSCTSCRKARAWLVKHEVDFQEHNIITSPLSRDELMSILSFTENGTEDIISTRSKVFQKLDIDVEELSISDLIDLIAKNPSLLRRPIIMDQKRMQIGFNEDEIRAFLSRDYRKQELRQATIKAEIEG</sequence>
<reference key="1">
    <citation type="journal article" date="2002" name="Proc. Natl. Acad. Sci. U.S.A.">
        <title>Genome sequence and comparative microarray analysis of serotype M18 group A Streptococcus strains associated with acute rheumatic fever outbreaks.</title>
        <authorList>
            <person name="Smoot J.C."/>
            <person name="Barbian K.D."/>
            <person name="Van Gompel J.J."/>
            <person name="Smoot L.M."/>
            <person name="Chaussee M.S."/>
            <person name="Sylva G.L."/>
            <person name="Sturdevant D.E."/>
            <person name="Ricklefs S.M."/>
            <person name="Porcella S.F."/>
            <person name="Parkins L.D."/>
            <person name="Beres S.B."/>
            <person name="Campbell D.S."/>
            <person name="Smith T.M."/>
            <person name="Zhang Q."/>
            <person name="Kapur V."/>
            <person name="Daly J.A."/>
            <person name="Veasy L.G."/>
            <person name="Musser J.M."/>
        </authorList>
    </citation>
    <scope>NUCLEOTIDE SEQUENCE [LARGE SCALE GENOMIC DNA]</scope>
    <source>
        <strain>MGAS8232</strain>
    </source>
</reference>